<reference key="1">
    <citation type="journal article" date="2004" name="Science">
        <title>A predator unmasked: life cycle of Bdellovibrio bacteriovorus from a genomic perspective.</title>
        <authorList>
            <person name="Rendulic S."/>
            <person name="Jagtap P."/>
            <person name="Rosinus A."/>
            <person name="Eppinger M."/>
            <person name="Baar C."/>
            <person name="Lanz C."/>
            <person name="Keller H."/>
            <person name="Lambert C."/>
            <person name="Evans K.J."/>
            <person name="Goesmann A."/>
            <person name="Meyer F."/>
            <person name="Sockett R.E."/>
            <person name="Schuster S.C."/>
        </authorList>
    </citation>
    <scope>NUCLEOTIDE SEQUENCE [LARGE SCALE GENOMIC DNA]</scope>
    <source>
        <strain>ATCC 15356 / DSM 50701 / NCIMB 9529 / HD100</strain>
    </source>
</reference>
<protein>
    <recommendedName>
        <fullName evidence="1">tRNA pseudouridine synthase B</fullName>
        <ecNumber evidence="1">5.4.99.25</ecNumber>
    </recommendedName>
    <alternativeName>
        <fullName evidence="1">tRNA pseudouridine(55) synthase</fullName>
        <shortName evidence="1">Psi55 synthase</shortName>
    </alternativeName>
    <alternativeName>
        <fullName evidence="1">tRNA pseudouridylate synthase</fullName>
    </alternativeName>
    <alternativeName>
        <fullName evidence="1">tRNA-uridine isomerase</fullName>
    </alternativeName>
</protein>
<comment type="function">
    <text evidence="1">Responsible for synthesis of pseudouridine from uracil-55 in the psi GC loop of transfer RNAs.</text>
</comment>
<comment type="catalytic activity">
    <reaction evidence="1">
        <text>uridine(55) in tRNA = pseudouridine(55) in tRNA</text>
        <dbReference type="Rhea" id="RHEA:42532"/>
        <dbReference type="Rhea" id="RHEA-COMP:10101"/>
        <dbReference type="Rhea" id="RHEA-COMP:10102"/>
        <dbReference type="ChEBI" id="CHEBI:65314"/>
        <dbReference type="ChEBI" id="CHEBI:65315"/>
        <dbReference type="EC" id="5.4.99.25"/>
    </reaction>
</comment>
<comment type="similarity">
    <text evidence="1">Belongs to the pseudouridine synthase TruB family. Type 1 subfamily.</text>
</comment>
<name>TRUB_BDEBA</name>
<proteinExistence type="inferred from homology"/>
<keyword id="KW-0413">Isomerase</keyword>
<keyword id="KW-1185">Reference proteome</keyword>
<keyword id="KW-0819">tRNA processing</keyword>
<dbReference type="EC" id="5.4.99.25" evidence="1"/>
<dbReference type="EMBL" id="BX842650">
    <property type="protein sequence ID" value="CAE79429.1"/>
    <property type="molecule type" value="Genomic_DNA"/>
</dbReference>
<dbReference type="RefSeq" id="WP_011164031.1">
    <property type="nucleotide sequence ID" value="NC_005363.1"/>
</dbReference>
<dbReference type="SMR" id="Q6MMS4"/>
<dbReference type="STRING" id="264462.Bd1549"/>
<dbReference type="GeneID" id="93012546"/>
<dbReference type="KEGG" id="bba:Bd1549"/>
<dbReference type="eggNOG" id="COG0130">
    <property type="taxonomic scope" value="Bacteria"/>
</dbReference>
<dbReference type="HOGENOM" id="CLU_032087_0_1_7"/>
<dbReference type="Proteomes" id="UP000008080">
    <property type="component" value="Chromosome"/>
</dbReference>
<dbReference type="GO" id="GO:0003723">
    <property type="term" value="F:RNA binding"/>
    <property type="evidence" value="ECO:0007669"/>
    <property type="project" value="InterPro"/>
</dbReference>
<dbReference type="GO" id="GO:0160148">
    <property type="term" value="F:tRNA pseudouridine(55) synthase activity"/>
    <property type="evidence" value="ECO:0007669"/>
    <property type="project" value="UniProtKB-EC"/>
</dbReference>
<dbReference type="GO" id="GO:1990481">
    <property type="term" value="P:mRNA pseudouridine synthesis"/>
    <property type="evidence" value="ECO:0007669"/>
    <property type="project" value="TreeGrafter"/>
</dbReference>
<dbReference type="GO" id="GO:0031119">
    <property type="term" value="P:tRNA pseudouridine synthesis"/>
    <property type="evidence" value="ECO:0007669"/>
    <property type="project" value="UniProtKB-UniRule"/>
</dbReference>
<dbReference type="CDD" id="cd02573">
    <property type="entry name" value="PseudoU_synth_EcTruB"/>
    <property type="match status" value="1"/>
</dbReference>
<dbReference type="Gene3D" id="3.30.2350.10">
    <property type="entry name" value="Pseudouridine synthase"/>
    <property type="match status" value="1"/>
</dbReference>
<dbReference type="HAMAP" id="MF_01080">
    <property type="entry name" value="TruB_bact"/>
    <property type="match status" value="1"/>
</dbReference>
<dbReference type="InterPro" id="IPR020103">
    <property type="entry name" value="PsdUridine_synth_cat_dom_sf"/>
</dbReference>
<dbReference type="InterPro" id="IPR002501">
    <property type="entry name" value="PsdUridine_synth_N"/>
</dbReference>
<dbReference type="InterPro" id="IPR014780">
    <property type="entry name" value="tRNA_psdUridine_synth_TruB"/>
</dbReference>
<dbReference type="InterPro" id="IPR032819">
    <property type="entry name" value="TruB_C"/>
</dbReference>
<dbReference type="NCBIfam" id="TIGR00431">
    <property type="entry name" value="TruB"/>
    <property type="match status" value="1"/>
</dbReference>
<dbReference type="PANTHER" id="PTHR13767:SF2">
    <property type="entry name" value="PSEUDOURIDYLATE SYNTHASE TRUB1"/>
    <property type="match status" value="1"/>
</dbReference>
<dbReference type="PANTHER" id="PTHR13767">
    <property type="entry name" value="TRNA-PSEUDOURIDINE SYNTHASE"/>
    <property type="match status" value="1"/>
</dbReference>
<dbReference type="Pfam" id="PF16198">
    <property type="entry name" value="TruB_C_2"/>
    <property type="match status" value="1"/>
</dbReference>
<dbReference type="Pfam" id="PF01509">
    <property type="entry name" value="TruB_N"/>
    <property type="match status" value="1"/>
</dbReference>
<dbReference type="SUPFAM" id="SSF55120">
    <property type="entry name" value="Pseudouridine synthase"/>
    <property type="match status" value="1"/>
</dbReference>
<evidence type="ECO:0000255" key="1">
    <source>
        <dbReference type="HAMAP-Rule" id="MF_01080"/>
    </source>
</evidence>
<organism>
    <name type="scientific">Bdellovibrio bacteriovorus (strain ATCC 15356 / DSM 50701 / NCIMB 9529 / HD100)</name>
    <dbReference type="NCBI Taxonomy" id="264462"/>
    <lineage>
        <taxon>Bacteria</taxon>
        <taxon>Pseudomonadati</taxon>
        <taxon>Bdellovibrionota</taxon>
        <taxon>Bdellovibrionia</taxon>
        <taxon>Bdellovibrionales</taxon>
        <taxon>Pseudobdellovibrionaceae</taxon>
        <taxon>Bdellovibrio</taxon>
    </lineage>
</organism>
<accession>Q6MMS4</accession>
<feature type="chain" id="PRO_0000121796" description="tRNA pseudouridine synthase B">
    <location>
        <begin position="1"/>
        <end position="308"/>
    </location>
</feature>
<feature type="active site" description="Nucleophile" evidence="1">
    <location>
        <position position="44"/>
    </location>
</feature>
<sequence>MTNKNQFNGLLLVDKPSGISSHDVVARLRRILSTRAVGHSGTLDPMASGLMACLVNEGTKLSQYILEGDKGYRLRAQFGIRTDTLDTTGETLETRPTDHLTRELILSEALKLQGEMEVEVPIYSAIKVQGKKLYEYARGEQEVTIPKKVMKFWDIEPVEIGSDWAEFDIKCSKGSYIRTWIDLLGKALGCGAAMSGLRRTWSSPYKIDQAQTLEQIEASVKGGSLGPAFVPMELALPQVKRIRIKGQDKVLLGNGQISHDLRSQLISAFNPDVDQYIQVLAQEGGELLAVIGLEPGRGFVLRRVFKYS</sequence>
<gene>
    <name evidence="1" type="primary">truB</name>
    <name type="ordered locus">Bd1549</name>
</gene>